<gene>
    <name evidence="2" type="primary">UNG1</name>
    <name type="ordered locus">YML021C</name>
</gene>
<reference key="1">
    <citation type="journal article" date="1989" name="J. Biol. Chem.">
        <title>Molecular cloning and primary structure of the uracil-DNA glycosylase gene from Saccharomyces cerevisiae.</title>
        <authorList>
            <person name="Percival K.J."/>
            <person name="Klein M.B."/>
            <person name="Burgers P.M.J."/>
        </authorList>
    </citation>
    <scope>NUCLEOTIDE SEQUENCE [GENOMIC DNA]</scope>
    <scope>FUNCTION</scope>
</reference>
<reference key="2">
    <citation type="journal article" date="1997" name="Nature">
        <title>The nucleotide sequence of Saccharomyces cerevisiae chromosome XIII.</title>
        <authorList>
            <person name="Bowman S."/>
            <person name="Churcher C.M."/>
            <person name="Badcock K."/>
            <person name="Brown D."/>
            <person name="Chillingworth T."/>
            <person name="Connor R."/>
            <person name="Dedman K."/>
            <person name="Devlin K."/>
            <person name="Gentles S."/>
            <person name="Hamlin N."/>
            <person name="Hunt S."/>
            <person name="Jagels K."/>
            <person name="Lye G."/>
            <person name="Moule S."/>
            <person name="Odell C."/>
            <person name="Pearson D."/>
            <person name="Rajandream M.A."/>
            <person name="Rice P."/>
            <person name="Skelton J."/>
            <person name="Walsh S.V."/>
            <person name="Whitehead S."/>
            <person name="Barrell B.G."/>
        </authorList>
    </citation>
    <scope>NUCLEOTIDE SEQUENCE [LARGE SCALE GENOMIC DNA]</scope>
    <source>
        <strain>ATCC 204508 / S288c</strain>
    </source>
</reference>
<reference key="3">
    <citation type="journal article" date="2014" name="G3 (Bethesda)">
        <title>The reference genome sequence of Saccharomyces cerevisiae: Then and now.</title>
        <authorList>
            <person name="Engel S.R."/>
            <person name="Dietrich F.S."/>
            <person name="Fisk D.G."/>
            <person name="Binkley G."/>
            <person name="Balakrishnan R."/>
            <person name="Costanzo M.C."/>
            <person name="Dwight S.S."/>
            <person name="Hitz B.C."/>
            <person name="Karra K."/>
            <person name="Nash R.S."/>
            <person name="Weng S."/>
            <person name="Wong E.D."/>
            <person name="Lloyd P."/>
            <person name="Skrzypek M.S."/>
            <person name="Miyasato S.R."/>
            <person name="Simison M."/>
            <person name="Cherry J.M."/>
        </authorList>
    </citation>
    <scope>GENOME REANNOTATION</scope>
    <source>
        <strain>ATCC 204508 / S288c</strain>
    </source>
</reference>
<reference key="4">
    <citation type="journal article" date="2007" name="Genome Res.">
        <title>Approaching a complete repository of sequence-verified protein-encoding clones for Saccharomyces cerevisiae.</title>
        <authorList>
            <person name="Hu Y."/>
            <person name="Rolfs A."/>
            <person name="Bhullar B."/>
            <person name="Murthy T.V.S."/>
            <person name="Zhu C."/>
            <person name="Berger M.F."/>
            <person name="Camargo A.A."/>
            <person name="Kelley F."/>
            <person name="McCarron S."/>
            <person name="Jepson D."/>
            <person name="Richardson A."/>
            <person name="Raphael J."/>
            <person name="Moreira D."/>
            <person name="Taycher E."/>
            <person name="Zuo D."/>
            <person name="Mohr S."/>
            <person name="Kane M.F."/>
            <person name="Williamson J."/>
            <person name="Simpson A.J.G."/>
            <person name="Bulyk M.L."/>
            <person name="Harlow E."/>
            <person name="Marsischky G."/>
            <person name="Kolodner R.D."/>
            <person name="LaBaer J."/>
        </authorList>
    </citation>
    <scope>NUCLEOTIDE SEQUENCE [GENOMIC DNA]</scope>
    <source>
        <strain>ATCC 204508 / S288c</strain>
    </source>
</reference>
<reference key="5">
    <citation type="journal article" date="1981" name="Nucleic Acids Res.">
        <title>Purification and characterization of a uracil-DNA glycosylase from the yeast, Saccharomyces cerevisiae.</title>
        <authorList>
            <person name="Crosby B."/>
            <person name="Prakash L."/>
            <person name="Davis H."/>
            <person name="Hinkle D.C."/>
        </authorList>
    </citation>
    <scope>FUNCTION</scope>
    <scope>CATALYTIC ACTIVITY</scope>
    <scope>BIOPHYSICOCHEMICAL PROPERTIES</scope>
    <source>
        <strain>ATCC 204626 / S288c / A364A</strain>
    </source>
</reference>
<reference key="6">
    <citation type="journal article" date="1991" name="J. Bacteriol.">
        <title>The spectrum of spontaneous mutations in a Saccharomyces cerevisiae uracil-DNA-glycosylase mutant limits the function of this enzyme to cytosine deamination repair.</title>
        <authorList>
            <person name="Impellizzeri K.J."/>
            <person name="Anderson B."/>
            <person name="Burgers P.M."/>
        </authorList>
    </citation>
    <scope>FUNCTION</scope>
    <scope>INDUCTION</scope>
</reference>
<reference key="7">
    <citation type="journal article" date="2001" name="Nucleic Acids Res.">
        <title>Uracil-DNA glycosylase-deficient yeast exhibit a mitochondrial mutator phenotype.</title>
        <authorList>
            <person name="Chatterjee A."/>
            <person name="Singh K.K."/>
        </authorList>
    </citation>
    <scope>FUNCTION</scope>
    <scope>SUBCELLULAR LOCATION</scope>
</reference>
<reference key="8">
    <citation type="journal article" date="2003" name="Nature">
        <title>Global analysis of protein expression in yeast.</title>
        <authorList>
            <person name="Ghaemmaghami S."/>
            <person name="Huh W.-K."/>
            <person name="Bower K."/>
            <person name="Howson R.W."/>
            <person name="Belle A."/>
            <person name="Dephoure N."/>
            <person name="O'Shea E.K."/>
            <person name="Weissman J.S."/>
        </authorList>
    </citation>
    <scope>LEVEL OF PROTEIN EXPRESSION [LARGE SCALE ANALYSIS]</scope>
</reference>
<reference key="9">
    <citation type="journal article" date="2007" name="Curr. Genet.">
        <title>High rate of starvation-associated mutagenesis in Ung(-) yeast caused by the overproduction of human activation-induced deaminase.</title>
        <authorList>
            <person name="Lucaccioni A."/>
            <person name="Pavlov Y.I."/>
            <person name="Achilli A."/>
            <person name="Babudri N."/>
        </authorList>
    </citation>
    <scope>INDUCTION</scope>
</reference>
<accession>P12887</accession>
<accession>D6VZF3</accession>
<accession>E9P912</accession>
<sequence>MWCMRRLPTNSVMTVARKRKQTTIEDFFGTKKSTNEAPNKKGKSGATFMTITNGAAIKTETKAVAKEANTDKYPANSNAKDVYSKNLSSNLRTLLSLELETIDDSWFPHLMDEFKKPYFVKLKQFVTKEQADHTVFPPAKDIYSWTRLTPFNKVKVVIIGQDPYHNFNQAHGLAFSVKPPTPAPPSLKNIYKELKQEYPDFVEDNKVGDLTHWASQGVLLLNTSLTVRAHNANSHSKHGWETFTKRVVQLLIQDREADGKSLVFLLWGNNAIKLVESLLGSTSVGSGSKYPNIMVMKSVHPSPLSASRGFFGTNHFKMINDWLYNTRGEKMIDWSVVPGTSLREVQEANARLESESKDP</sequence>
<feature type="transit peptide" description="Mitochondrion" evidence="1">
    <location>
        <begin position="1"/>
        <end position="21"/>
    </location>
</feature>
<feature type="chain" id="PRO_0000036085" description="Uracil-DNA glycosylase">
    <location>
        <begin position="22"/>
        <end position="359"/>
    </location>
</feature>
<feature type="active site" description="Proton acceptor" evidence="2">
    <location>
        <position position="162"/>
    </location>
</feature>
<feature type="sequence conflict" description="In Ref. 4; AAT93039." evidence="9" ref="4">
    <original>L</original>
    <variation>S</variation>
    <location>
        <position position="173"/>
    </location>
</feature>
<comment type="function">
    <text evidence="2 3 6 7 8">Excises uracil residues from the DNA which can arise as a result of misincorporation of dUMP residues by DNA polymerase or due to deamination of cytosine. Not involved in strand-directed mismatch repair.</text>
</comment>
<comment type="catalytic activity">
    <reaction evidence="2 8">
        <text>Hydrolyzes single-stranded DNA or mismatched double-stranded DNA and polynucleotides, releasing free uracil.</text>
        <dbReference type="EC" id="3.2.2.27"/>
    </reaction>
</comment>
<comment type="biophysicochemical properties">
    <phDependence>
        <text evidence="8">Optimum pH is 7.5-8.</text>
    </phDependence>
</comment>
<comment type="interaction">
    <interactant intactId="EBI-2097931">
        <id>P12887</id>
    </interactant>
    <interactant intactId="EBI-12993">
        <id>P15873</id>
        <label>POL30</label>
    </interactant>
    <organismsDiffer>false</organismsDiffer>
    <experiments>4</experiments>
</comment>
<comment type="subcellular location">
    <subcellularLocation>
        <location evidence="2 3">Mitochondrion</location>
    </subcellularLocation>
    <subcellularLocation>
        <location evidence="2 3">Nucleus</location>
    </subcellularLocation>
</comment>
<comment type="induction">
    <text evidence="5 6">Induced in late G1 and early S phase of the cell cycle.</text>
</comment>
<comment type="miscellaneous">
    <text evidence="4">Present with 4820 molecules/cell in log phase SD medium.</text>
</comment>
<comment type="similarity">
    <text evidence="2">Belongs to the uracil-DNA glycosylase (UDG) superfamily. UNG family.</text>
</comment>
<evidence type="ECO:0000255" key="1"/>
<evidence type="ECO:0000255" key="2">
    <source>
        <dbReference type="HAMAP-Rule" id="MF_03166"/>
    </source>
</evidence>
<evidence type="ECO:0000269" key="3">
    <source>
    </source>
</evidence>
<evidence type="ECO:0000269" key="4">
    <source>
    </source>
</evidence>
<evidence type="ECO:0000269" key="5">
    <source>
    </source>
</evidence>
<evidence type="ECO:0000269" key="6">
    <source>
    </source>
</evidence>
<evidence type="ECO:0000269" key="7">
    <source>
    </source>
</evidence>
<evidence type="ECO:0000269" key="8">
    <source>
    </source>
</evidence>
<evidence type="ECO:0000305" key="9"/>
<protein>
    <recommendedName>
        <fullName evidence="2">Uracil-DNA glycosylase</fullName>
        <shortName evidence="2">UDG</shortName>
        <ecNumber evidence="2">3.2.2.27</ecNumber>
    </recommendedName>
</protein>
<organism>
    <name type="scientific">Saccharomyces cerevisiae (strain ATCC 204508 / S288c)</name>
    <name type="common">Baker's yeast</name>
    <dbReference type="NCBI Taxonomy" id="559292"/>
    <lineage>
        <taxon>Eukaryota</taxon>
        <taxon>Fungi</taxon>
        <taxon>Dikarya</taxon>
        <taxon>Ascomycota</taxon>
        <taxon>Saccharomycotina</taxon>
        <taxon>Saccharomycetes</taxon>
        <taxon>Saccharomycetales</taxon>
        <taxon>Saccharomycetaceae</taxon>
        <taxon>Saccharomyces</taxon>
    </lineage>
</organism>
<name>UNG_YEAST</name>
<keyword id="KW-0227">DNA damage</keyword>
<keyword id="KW-0234">DNA repair</keyword>
<keyword id="KW-0378">Hydrolase</keyword>
<keyword id="KW-0496">Mitochondrion</keyword>
<keyword id="KW-0539">Nucleus</keyword>
<keyword id="KW-1185">Reference proteome</keyword>
<keyword id="KW-0809">Transit peptide</keyword>
<proteinExistence type="evidence at protein level"/>
<dbReference type="EC" id="3.2.2.27" evidence="2"/>
<dbReference type="EMBL" id="J04470">
    <property type="protein sequence ID" value="AAA35195.1"/>
    <property type="molecule type" value="Genomic_DNA"/>
</dbReference>
<dbReference type="EMBL" id="Z46659">
    <property type="protein sequence ID" value="CAA86634.1"/>
    <property type="molecule type" value="Genomic_DNA"/>
</dbReference>
<dbReference type="EMBL" id="AY693020">
    <property type="protein sequence ID" value="AAT93039.1"/>
    <property type="molecule type" value="Genomic_DNA"/>
</dbReference>
<dbReference type="EMBL" id="BK006946">
    <property type="protein sequence ID" value="DAA09877.1"/>
    <property type="molecule type" value="Genomic_DNA"/>
</dbReference>
<dbReference type="PIR" id="A31425">
    <property type="entry name" value="A31425"/>
</dbReference>
<dbReference type="RefSeq" id="NP_013691.1">
    <property type="nucleotide sequence ID" value="NM_001182379.1"/>
</dbReference>
<dbReference type="SMR" id="P12887"/>
<dbReference type="BioGRID" id="35148">
    <property type="interactions" value="78"/>
</dbReference>
<dbReference type="DIP" id="DIP-8264N"/>
<dbReference type="ELM" id="P12887"/>
<dbReference type="FunCoup" id="P12887">
    <property type="interactions" value="402"/>
</dbReference>
<dbReference type="IntAct" id="P12887">
    <property type="interactions" value="3"/>
</dbReference>
<dbReference type="STRING" id="4932.YML021C"/>
<dbReference type="GlyGen" id="P12887">
    <property type="glycosylation" value="1 site"/>
</dbReference>
<dbReference type="iPTMnet" id="P12887"/>
<dbReference type="PaxDb" id="4932-YML021C"/>
<dbReference type="PeptideAtlas" id="P12887"/>
<dbReference type="EnsemblFungi" id="YML021C_mRNA">
    <property type="protein sequence ID" value="YML021C"/>
    <property type="gene ID" value="YML021C"/>
</dbReference>
<dbReference type="GeneID" id="854987"/>
<dbReference type="KEGG" id="sce:YML021C"/>
<dbReference type="AGR" id="SGD:S000004483"/>
<dbReference type="SGD" id="S000004483">
    <property type="gene designation" value="UNG1"/>
</dbReference>
<dbReference type="VEuPathDB" id="FungiDB:YML021C"/>
<dbReference type="eggNOG" id="KOG2994">
    <property type="taxonomic scope" value="Eukaryota"/>
</dbReference>
<dbReference type="GeneTree" id="ENSGT00390000003405"/>
<dbReference type="HOGENOM" id="CLU_032162_2_2_1"/>
<dbReference type="InParanoid" id="P12887"/>
<dbReference type="OMA" id="PDNGYLM"/>
<dbReference type="OrthoDB" id="10031947at2759"/>
<dbReference type="BioCyc" id="YEAST:G3O-32624-MONOMER"/>
<dbReference type="Reactome" id="R-SCE-110329">
    <property type="pathway name" value="Cleavage of the damaged pyrimidine"/>
</dbReference>
<dbReference type="BioGRID-ORCS" id="854987">
    <property type="hits" value="0 hits in 10 CRISPR screens"/>
</dbReference>
<dbReference type="PRO" id="PR:P12887"/>
<dbReference type="Proteomes" id="UP000002311">
    <property type="component" value="Chromosome XIII"/>
</dbReference>
<dbReference type="RNAct" id="P12887">
    <property type="molecule type" value="protein"/>
</dbReference>
<dbReference type="GO" id="GO:0005739">
    <property type="term" value="C:mitochondrion"/>
    <property type="evidence" value="ECO:0000314"/>
    <property type="project" value="SGD"/>
</dbReference>
<dbReference type="GO" id="GO:0005634">
    <property type="term" value="C:nucleus"/>
    <property type="evidence" value="ECO:0000314"/>
    <property type="project" value="SGD"/>
</dbReference>
<dbReference type="GO" id="GO:0004844">
    <property type="term" value="F:uracil DNA N-glycosylase activity"/>
    <property type="evidence" value="ECO:0000314"/>
    <property type="project" value="SGD"/>
</dbReference>
<dbReference type="GO" id="GO:0097510">
    <property type="term" value="P:base-excision repair, AP site formation via deaminated base removal"/>
    <property type="evidence" value="ECO:0000318"/>
    <property type="project" value="GO_Central"/>
</dbReference>
<dbReference type="GO" id="GO:0006281">
    <property type="term" value="P:DNA repair"/>
    <property type="evidence" value="ECO:0000315"/>
    <property type="project" value="SGD"/>
</dbReference>
<dbReference type="CDD" id="cd10027">
    <property type="entry name" value="UDG-F1-like"/>
    <property type="match status" value="1"/>
</dbReference>
<dbReference type="FunFam" id="3.40.470.10:FF:000007">
    <property type="entry name" value="Uracil-DNA glycosylase"/>
    <property type="match status" value="1"/>
</dbReference>
<dbReference type="Gene3D" id="3.40.470.10">
    <property type="entry name" value="Uracil-DNA glycosylase-like domain"/>
    <property type="match status" value="1"/>
</dbReference>
<dbReference type="HAMAP" id="MF_00148">
    <property type="entry name" value="UDG"/>
    <property type="match status" value="1"/>
</dbReference>
<dbReference type="InterPro" id="IPR002043">
    <property type="entry name" value="UDG_fam1"/>
</dbReference>
<dbReference type="InterPro" id="IPR018085">
    <property type="entry name" value="Ura-DNA_Glyclase_AS"/>
</dbReference>
<dbReference type="InterPro" id="IPR005122">
    <property type="entry name" value="Uracil-DNA_glycosylase-like"/>
</dbReference>
<dbReference type="InterPro" id="IPR036895">
    <property type="entry name" value="Uracil-DNA_glycosylase-like_sf"/>
</dbReference>
<dbReference type="NCBIfam" id="NF003588">
    <property type="entry name" value="PRK05254.1-1"/>
    <property type="match status" value="1"/>
</dbReference>
<dbReference type="NCBIfam" id="NF003589">
    <property type="entry name" value="PRK05254.1-2"/>
    <property type="match status" value="1"/>
</dbReference>
<dbReference type="NCBIfam" id="NF003592">
    <property type="entry name" value="PRK05254.1-5"/>
    <property type="match status" value="1"/>
</dbReference>
<dbReference type="NCBIfam" id="TIGR00628">
    <property type="entry name" value="ung"/>
    <property type="match status" value="1"/>
</dbReference>
<dbReference type="PANTHER" id="PTHR11264">
    <property type="entry name" value="URACIL-DNA GLYCOSYLASE"/>
    <property type="match status" value="1"/>
</dbReference>
<dbReference type="PANTHER" id="PTHR11264:SF0">
    <property type="entry name" value="URACIL-DNA GLYCOSYLASE"/>
    <property type="match status" value="1"/>
</dbReference>
<dbReference type="Pfam" id="PF03167">
    <property type="entry name" value="UDG"/>
    <property type="match status" value="1"/>
</dbReference>
<dbReference type="SMART" id="SM00986">
    <property type="entry name" value="UDG"/>
    <property type="match status" value="1"/>
</dbReference>
<dbReference type="SMART" id="SM00987">
    <property type="entry name" value="UreE_C"/>
    <property type="match status" value="1"/>
</dbReference>
<dbReference type="SUPFAM" id="SSF52141">
    <property type="entry name" value="Uracil-DNA glycosylase-like"/>
    <property type="match status" value="1"/>
</dbReference>
<dbReference type="PROSITE" id="PS00130">
    <property type="entry name" value="U_DNA_GLYCOSYLASE"/>
    <property type="match status" value="1"/>
</dbReference>